<gene>
    <name type="ordered locus">HPAG1_0809</name>
</gene>
<accession>Q1CT46</accession>
<comment type="similarity">
    <text evidence="1">Belongs to the UPF0102 family.</text>
</comment>
<organism>
    <name type="scientific">Helicobacter pylori (strain HPAG1)</name>
    <dbReference type="NCBI Taxonomy" id="357544"/>
    <lineage>
        <taxon>Bacteria</taxon>
        <taxon>Pseudomonadati</taxon>
        <taxon>Campylobacterota</taxon>
        <taxon>Epsilonproteobacteria</taxon>
        <taxon>Campylobacterales</taxon>
        <taxon>Helicobacteraceae</taxon>
        <taxon>Helicobacter</taxon>
    </lineage>
</organism>
<feature type="chain" id="PRO_1000009227" description="UPF0102 protein HPAG1_0809">
    <location>
        <begin position="1"/>
        <end position="114"/>
    </location>
</feature>
<sequence>MRFLNNKHRAKGLKAEEEACEFLKTLGFEMVERNFFSKFGEIDIIALKKGVLHFIEVKSGENFDPIYAITPSKLKKMIKTIRCYLSQKDPNSDFCIDALIVKNGKFELLENITF</sequence>
<name>Y809_HELPH</name>
<protein>
    <recommendedName>
        <fullName evidence="1">UPF0102 protein HPAG1_0809</fullName>
    </recommendedName>
</protein>
<dbReference type="EMBL" id="CP000241">
    <property type="protein sequence ID" value="ABF84876.1"/>
    <property type="molecule type" value="Genomic_DNA"/>
</dbReference>
<dbReference type="RefSeq" id="WP_001211674.1">
    <property type="nucleotide sequence ID" value="NC_008086.1"/>
</dbReference>
<dbReference type="SMR" id="Q1CT46"/>
<dbReference type="KEGG" id="hpa:HPAG1_0809"/>
<dbReference type="HOGENOM" id="CLU_115353_3_2_7"/>
<dbReference type="GO" id="GO:0003676">
    <property type="term" value="F:nucleic acid binding"/>
    <property type="evidence" value="ECO:0007669"/>
    <property type="project" value="InterPro"/>
</dbReference>
<dbReference type="Gene3D" id="3.40.1350.10">
    <property type="match status" value="1"/>
</dbReference>
<dbReference type="HAMAP" id="MF_00048">
    <property type="entry name" value="UPF0102"/>
    <property type="match status" value="1"/>
</dbReference>
<dbReference type="InterPro" id="IPR011335">
    <property type="entry name" value="Restrct_endonuc-II-like"/>
</dbReference>
<dbReference type="InterPro" id="IPR011856">
    <property type="entry name" value="tRNA_endonuc-like_dom_sf"/>
</dbReference>
<dbReference type="InterPro" id="IPR003509">
    <property type="entry name" value="UPF0102_YraN-like"/>
</dbReference>
<dbReference type="NCBIfam" id="NF009152">
    <property type="entry name" value="PRK12497.2-4"/>
    <property type="match status" value="1"/>
</dbReference>
<dbReference type="PANTHER" id="PTHR34039">
    <property type="entry name" value="UPF0102 PROTEIN YRAN"/>
    <property type="match status" value="1"/>
</dbReference>
<dbReference type="PANTHER" id="PTHR34039:SF1">
    <property type="entry name" value="UPF0102 PROTEIN YRAN"/>
    <property type="match status" value="1"/>
</dbReference>
<dbReference type="Pfam" id="PF02021">
    <property type="entry name" value="UPF0102"/>
    <property type="match status" value="1"/>
</dbReference>
<dbReference type="SUPFAM" id="SSF52980">
    <property type="entry name" value="Restriction endonuclease-like"/>
    <property type="match status" value="1"/>
</dbReference>
<evidence type="ECO:0000255" key="1">
    <source>
        <dbReference type="HAMAP-Rule" id="MF_00048"/>
    </source>
</evidence>
<reference key="1">
    <citation type="journal article" date="2006" name="Proc. Natl. Acad. Sci. U.S.A.">
        <title>The complete genome sequence of a chronic atrophic gastritis Helicobacter pylori strain: evolution during disease progression.</title>
        <authorList>
            <person name="Oh J.D."/>
            <person name="Kling-Baeckhed H."/>
            <person name="Giannakis M."/>
            <person name="Xu J."/>
            <person name="Fulton R.S."/>
            <person name="Fulton L.A."/>
            <person name="Cordum H.S."/>
            <person name="Wang C."/>
            <person name="Elliott G."/>
            <person name="Edwards J."/>
            <person name="Mardis E.R."/>
            <person name="Engstrand L.G."/>
            <person name="Gordon J.I."/>
        </authorList>
    </citation>
    <scope>NUCLEOTIDE SEQUENCE [LARGE SCALE GENOMIC DNA]</scope>
    <source>
        <strain>HPAG1</strain>
    </source>
</reference>
<proteinExistence type="inferred from homology"/>